<sequence length="330" mass="36689">MNNYFSMEAFDYDDIQLVPNKAIVNSRKECVTSVKFGNRTFKIPVVPANMESVIDEKLAVWLAQNGYYYVMHRFQPEKRADFIKMMHEKGLFASISVGIKDDEYDFIDELVEKDLIPEYTTIDVAHGHSVYVIDMIKYIKEKMPDTFLTAGNVATPEAVRELENAGADATKVGVGPGKACITKLKTGFGTGGWQLAALRMCSKVARKPLIADGGIRHNGDIAKSVRFGASMVMIGSMLAGHEESPGNVIKIDGKTYKQYWGSASEVQKGAYRNVEGKQMLVPYRGSIANTLEEMKEDLQSSISYAGGRDLESIKRVDYVIVKNTIMNGDY</sequence>
<protein>
    <recommendedName>
        <fullName evidence="1">GMP reductase</fullName>
        <ecNumber evidence="1">1.7.1.7</ecNumber>
    </recommendedName>
    <alternativeName>
        <fullName evidence="1">Guanosine 5'-monophosphate oxidoreductase</fullName>
        <shortName evidence="1">Guanosine monophosphate reductase</shortName>
    </alternativeName>
</protein>
<gene>
    <name evidence="1" type="primary">guaC</name>
    <name type="ordered locus">LBUL_0246</name>
</gene>
<dbReference type="EC" id="1.7.1.7" evidence="1"/>
<dbReference type="EMBL" id="CP000412">
    <property type="protein sequence ID" value="ABJ57912.1"/>
    <property type="molecule type" value="Genomic_DNA"/>
</dbReference>
<dbReference type="RefSeq" id="WP_003619456.1">
    <property type="nucleotide sequence ID" value="NC_008529.1"/>
</dbReference>
<dbReference type="SMR" id="Q04CB0"/>
<dbReference type="KEGG" id="lbu:LBUL_0246"/>
<dbReference type="HOGENOM" id="CLU_022552_5_0_9"/>
<dbReference type="BioCyc" id="LDEL321956:LBUL_RS01140-MONOMER"/>
<dbReference type="GO" id="GO:0005829">
    <property type="term" value="C:cytosol"/>
    <property type="evidence" value="ECO:0007669"/>
    <property type="project" value="TreeGrafter"/>
</dbReference>
<dbReference type="GO" id="GO:1902560">
    <property type="term" value="C:GMP reductase complex"/>
    <property type="evidence" value="ECO:0007669"/>
    <property type="project" value="InterPro"/>
</dbReference>
<dbReference type="GO" id="GO:0003920">
    <property type="term" value="F:GMP reductase activity"/>
    <property type="evidence" value="ECO:0007669"/>
    <property type="project" value="UniProtKB-UniRule"/>
</dbReference>
<dbReference type="GO" id="GO:0006163">
    <property type="term" value="P:purine nucleotide metabolic process"/>
    <property type="evidence" value="ECO:0007669"/>
    <property type="project" value="UniProtKB-UniRule"/>
</dbReference>
<dbReference type="CDD" id="cd00381">
    <property type="entry name" value="IMPDH"/>
    <property type="match status" value="1"/>
</dbReference>
<dbReference type="FunFam" id="3.20.20.70:FF:000424">
    <property type="entry name" value="Inosine-5'-monophosphate dehydrogenase 2"/>
    <property type="match status" value="1"/>
</dbReference>
<dbReference type="Gene3D" id="3.20.20.70">
    <property type="entry name" value="Aldolase class I"/>
    <property type="match status" value="1"/>
</dbReference>
<dbReference type="HAMAP" id="MF_01511">
    <property type="entry name" value="GMP_reduct_type2"/>
    <property type="match status" value="1"/>
</dbReference>
<dbReference type="InterPro" id="IPR013785">
    <property type="entry name" value="Aldolase_TIM"/>
</dbReference>
<dbReference type="InterPro" id="IPR050139">
    <property type="entry name" value="GMP_reductase"/>
</dbReference>
<dbReference type="InterPro" id="IPR005994">
    <property type="entry name" value="GuaC_type_2"/>
</dbReference>
<dbReference type="InterPro" id="IPR015875">
    <property type="entry name" value="IMP_DH/GMP_Rdtase_CS"/>
</dbReference>
<dbReference type="InterPro" id="IPR001093">
    <property type="entry name" value="IMP_DH_GMPRt"/>
</dbReference>
<dbReference type="NCBIfam" id="TIGR01306">
    <property type="entry name" value="GMP_reduct_2"/>
    <property type="match status" value="1"/>
</dbReference>
<dbReference type="NCBIfam" id="NF003966">
    <property type="entry name" value="PRK05458.1"/>
    <property type="match status" value="1"/>
</dbReference>
<dbReference type="PANTHER" id="PTHR43170">
    <property type="entry name" value="GMP REDUCTASE"/>
    <property type="match status" value="1"/>
</dbReference>
<dbReference type="PANTHER" id="PTHR43170:SF5">
    <property type="entry name" value="GMP REDUCTASE"/>
    <property type="match status" value="1"/>
</dbReference>
<dbReference type="Pfam" id="PF00478">
    <property type="entry name" value="IMPDH"/>
    <property type="match status" value="1"/>
</dbReference>
<dbReference type="PIRSF" id="PIRSF036500">
    <property type="entry name" value="GMP_red_Firmic"/>
    <property type="match status" value="1"/>
</dbReference>
<dbReference type="SMART" id="SM01240">
    <property type="entry name" value="IMPDH"/>
    <property type="match status" value="1"/>
</dbReference>
<dbReference type="SUPFAM" id="SSF51412">
    <property type="entry name" value="Inosine monophosphate dehydrogenase (IMPDH)"/>
    <property type="match status" value="1"/>
</dbReference>
<dbReference type="PROSITE" id="PS00487">
    <property type="entry name" value="IMP_DH_GMP_RED"/>
    <property type="match status" value="1"/>
</dbReference>
<organism>
    <name type="scientific">Lactobacillus delbrueckii subsp. bulgaricus (strain ATCC BAA-365 / Lb-18)</name>
    <dbReference type="NCBI Taxonomy" id="321956"/>
    <lineage>
        <taxon>Bacteria</taxon>
        <taxon>Bacillati</taxon>
        <taxon>Bacillota</taxon>
        <taxon>Bacilli</taxon>
        <taxon>Lactobacillales</taxon>
        <taxon>Lactobacillaceae</taxon>
        <taxon>Lactobacillus</taxon>
    </lineage>
</organism>
<evidence type="ECO:0000255" key="1">
    <source>
        <dbReference type="HAMAP-Rule" id="MF_01511"/>
    </source>
</evidence>
<keyword id="KW-0521">NADP</keyword>
<keyword id="KW-0560">Oxidoreductase</keyword>
<reference key="1">
    <citation type="journal article" date="2006" name="Proc. Natl. Acad. Sci. U.S.A.">
        <title>Comparative genomics of the lactic acid bacteria.</title>
        <authorList>
            <person name="Makarova K.S."/>
            <person name="Slesarev A."/>
            <person name="Wolf Y.I."/>
            <person name="Sorokin A."/>
            <person name="Mirkin B."/>
            <person name="Koonin E.V."/>
            <person name="Pavlov A."/>
            <person name="Pavlova N."/>
            <person name="Karamychev V."/>
            <person name="Polouchine N."/>
            <person name="Shakhova V."/>
            <person name="Grigoriev I."/>
            <person name="Lou Y."/>
            <person name="Rohksar D."/>
            <person name="Lucas S."/>
            <person name="Huang K."/>
            <person name="Goodstein D.M."/>
            <person name="Hawkins T."/>
            <person name="Plengvidhya V."/>
            <person name="Welker D."/>
            <person name="Hughes J."/>
            <person name="Goh Y."/>
            <person name="Benson A."/>
            <person name="Baldwin K."/>
            <person name="Lee J.-H."/>
            <person name="Diaz-Muniz I."/>
            <person name="Dosti B."/>
            <person name="Smeianov V."/>
            <person name="Wechter W."/>
            <person name="Barabote R."/>
            <person name="Lorca G."/>
            <person name="Altermann E."/>
            <person name="Barrangou R."/>
            <person name="Ganesan B."/>
            <person name="Xie Y."/>
            <person name="Rawsthorne H."/>
            <person name="Tamir D."/>
            <person name="Parker C."/>
            <person name="Breidt F."/>
            <person name="Broadbent J.R."/>
            <person name="Hutkins R."/>
            <person name="O'Sullivan D."/>
            <person name="Steele J."/>
            <person name="Unlu G."/>
            <person name="Saier M.H. Jr."/>
            <person name="Klaenhammer T."/>
            <person name="Richardson P."/>
            <person name="Kozyavkin S."/>
            <person name="Weimer B.C."/>
            <person name="Mills D.A."/>
        </authorList>
    </citation>
    <scope>NUCLEOTIDE SEQUENCE [LARGE SCALE GENOMIC DNA]</scope>
    <source>
        <strain>ATCC BAA-365 / Lb-18</strain>
    </source>
</reference>
<accession>Q04CB0</accession>
<comment type="function">
    <text evidence="1">Catalyzes the irreversible NADPH-dependent deamination of GMP to IMP. It functions in the conversion of nucleobase, nucleoside and nucleotide derivatives of G to A nucleotides, and in maintaining the intracellular balance of A and G nucleotides.</text>
</comment>
<comment type="catalytic activity">
    <reaction evidence="1">
        <text>IMP + NH4(+) + NADP(+) = GMP + NADPH + 2 H(+)</text>
        <dbReference type="Rhea" id="RHEA:17185"/>
        <dbReference type="ChEBI" id="CHEBI:15378"/>
        <dbReference type="ChEBI" id="CHEBI:28938"/>
        <dbReference type="ChEBI" id="CHEBI:57783"/>
        <dbReference type="ChEBI" id="CHEBI:58053"/>
        <dbReference type="ChEBI" id="CHEBI:58115"/>
        <dbReference type="ChEBI" id="CHEBI:58349"/>
        <dbReference type="EC" id="1.7.1.7"/>
    </reaction>
</comment>
<comment type="similarity">
    <text evidence="1">Belongs to the IMPDH/GMPR family. GuaC type 2 subfamily.</text>
</comment>
<proteinExistence type="inferred from homology"/>
<feature type="chain" id="PRO_0000294274" description="GMP reductase">
    <location>
        <begin position="1"/>
        <end position="330"/>
    </location>
</feature>
<feature type="active site" description="Thioimidate intermediate" evidence="1">
    <location>
        <position position="180"/>
    </location>
</feature>
<feature type="binding site" evidence="1">
    <location>
        <begin position="209"/>
        <end position="232"/>
    </location>
    <ligand>
        <name>NADP(+)</name>
        <dbReference type="ChEBI" id="CHEBI:58349"/>
    </ligand>
</feature>
<name>GUAC_LACDB</name>